<accession>Q2GG37</accession>
<keyword id="KW-0004">4Fe-4S</keyword>
<keyword id="KW-0408">Iron</keyword>
<keyword id="KW-0411">Iron-sulfur</keyword>
<keyword id="KW-0456">Lyase</keyword>
<keyword id="KW-0479">Metal-binding</keyword>
<keyword id="KW-1185">Reference proteome</keyword>
<keyword id="KW-0949">S-adenosyl-L-methionine</keyword>
<keyword id="KW-0784">Thiamine biosynthesis</keyword>
<keyword id="KW-0862">Zinc</keyword>
<gene>
    <name evidence="1" type="primary">thiC</name>
    <name type="ordered locus">ECH_0798</name>
</gene>
<name>THIC_EHRCR</name>
<organism>
    <name type="scientific">Ehrlichia chaffeensis (strain ATCC CRL-10679 / Arkansas)</name>
    <dbReference type="NCBI Taxonomy" id="205920"/>
    <lineage>
        <taxon>Bacteria</taxon>
        <taxon>Pseudomonadati</taxon>
        <taxon>Pseudomonadota</taxon>
        <taxon>Alphaproteobacteria</taxon>
        <taxon>Rickettsiales</taxon>
        <taxon>Anaplasmataceae</taxon>
        <taxon>Ehrlichia</taxon>
    </lineage>
</organism>
<proteinExistence type="inferred from homology"/>
<dbReference type="EC" id="4.1.99.17" evidence="1"/>
<dbReference type="EMBL" id="CP000236">
    <property type="protein sequence ID" value="ABD45467.1"/>
    <property type="molecule type" value="Genomic_DNA"/>
</dbReference>
<dbReference type="RefSeq" id="WP_011452818.1">
    <property type="nucleotide sequence ID" value="NC_007799.1"/>
</dbReference>
<dbReference type="SMR" id="Q2GG37"/>
<dbReference type="STRING" id="205920.ECH_0798"/>
<dbReference type="KEGG" id="ech:ECH_0798"/>
<dbReference type="eggNOG" id="COG0422">
    <property type="taxonomic scope" value="Bacteria"/>
</dbReference>
<dbReference type="HOGENOM" id="CLU_013181_2_1_5"/>
<dbReference type="OrthoDB" id="9805897at2"/>
<dbReference type="UniPathway" id="UPA00060"/>
<dbReference type="Proteomes" id="UP000008320">
    <property type="component" value="Chromosome"/>
</dbReference>
<dbReference type="GO" id="GO:0005829">
    <property type="term" value="C:cytosol"/>
    <property type="evidence" value="ECO:0007669"/>
    <property type="project" value="TreeGrafter"/>
</dbReference>
<dbReference type="GO" id="GO:0051539">
    <property type="term" value="F:4 iron, 4 sulfur cluster binding"/>
    <property type="evidence" value="ECO:0007669"/>
    <property type="project" value="UniProtKB-KW"/>
</dbReference>
<dbReference type="GO" id="GO:0016830">
    <property type="term" value="F:carbon-carbon lyase activity"/>
    <property type="evidence" value="ECO:0007669"/>
    <property type="project" value="InterPro"/>
</dbReference>
<dbReference type="GO" id="GO:0008270">
    <property type="term" value="F:zinc ion binding"/>
    <property type="evidence" value="ECO:0007669"/>
    <property type="project" value="UniProtKB-UniRule"/>
</dbReference>
<dbReference type="GO" id="GO:0009228">
    <property type="term" value="P:thiamine biosynthetic process"/>
    <property type="evidence" value="ECO:0007669"/>
    <property type="project" value="UniProtKB-KW"/>
</dbReference>
<dbReference type="GO" id="GO:0009229">
    <property type="term" value="P:thiamine diphosphate biosynthetic process"/>
    <property type="evidence" value="ECO:0007669"/>
    <property type="project" value="UniProtKB-UniRule"/>
</dbReference>
<dbReference type="FunFam" id="3.20.20.540:FF:000001">
    <property type="entry name" value="Phosphomethylpyrimidine synthase"/>
    <property type="match status" value="1"/>
</dbReference>
<dbReference type="Gene3D" id="6.10.250.620">
    <property type="match status" value="1"/>
</dbReference>
<dbReference type="Gene3D" id="3.20.20.540">
    <property type="entry name" value="Radical SAM ThiC family, central domain"/>
    <property type="match status" value="1"/>
</dbReference>
<dbReference type="HAMAP" id="MF_00089">
    <property type="entry name" value="ThiC"/>
    <property type="match status" value="1"/>
</dbReference>
<dbReference type="InterPro" id="IPR037509">
    <property type="entry name" value="ThiC"/>
</dbReference>
<dbReference type="InterPro" id="IPR025747">
    <property type="entry name" value="ThiC-associated_dom"/>
</dbReference>
<dbReference type="InterPro" id="IPR038521">
    <property type="entry name" value="ThiC/Bza_core_dom"/>
</dbReference>
<dbReference type="InterPro" id="IPR002817">
    <property type="entry name" value="ThiC/BzaA/B"/>
</dbReference>
<dbReference type="NCBIfam" id="NF006763">
    <property type="entry name" value="PRK09284.1"/>
    <property type="match status" value="1"/>
</dbReference>
<dbReference type="NCBIfam" id="NF009895">
    <property type="entry name" value="PRK13352.1"/>
    <property type="match status" value="1"/>
</dbReference>
<dbReference type="NCBIfam" id="TIGR00190">
    <property type="entry name" value="thiC"/>
    <property type="match status" value="1"/>
</dbReference>
<dbReference type="PANTHER" id="PTHR30557:SF1">
    <property type="entry name" value="PHOSPHOMETHYLPYRIMIDINE SYNTHASE, CHLOROPLASTIC"/>
    <property type="match status" value="1"/>
</dbReference>
<dbReference type="PANTHER" id="PTHR30557">
    <property type="entry name" value="THIAMINE BIOSYNTHESIS PROTEIN THIC"/>
    <property type="match status" value="1"/>
</dbReference>
<dbReference type="Pfam" id="PF13667">
    <property type="entry name" value="ThiC-associated"/>
    <property type="match status" value="1"/>
</dbReference>
<dbReference type="Pfam" id="PF01964">
    <property type="entry name" value="ThiC_Rad_SAM"/>
    <property type="match status" value="1"/>
</dbReference>
<dbReference type="SFLD" id="SFLDF00407">
    <property type="entry name" value="phosphomethylpyrimidine_syntha"/>
    <property type="match status" value="1"/>
</dbReference>
<dbReference type="SFLD" id="SFLDG01114">
    <property type="entry name" value="phosphomethylpyrimidine_syntha"/>
    <property type="match status" value="1"/>
</dbReference>
<dbReference type="SFLD" id="SFLDS00113">
    <property type="entry name" value="Radical_SAM_Phosphomethylpyrim"/>
    <property type="match status" value="1"/>
</dbReference>
<reference key="1">
    <citation type="journal article" date="2006" name="PLoS Genet.">
        <title>Comparative genomics of emerging human ehrlichiosis agents.</title>
        <authorList>
            <person name="Dunning Hotopp J.C."/>
            <person name="Lin M."/>
            <person name="Madupu R."/>
            <person name="Crabtree J."/>
            <person name="Angiuoli S.V."/>
            <person name="Eisen J.A."/>
            <person name="Seshadri R."/>
            <person name="Ren Q."/>
            <person name="Wu M."/>
            <person name="Utterback T.R."/>
            <person name="Smith S."/>
            <person name="Lewis M."/>
            <person name="Khouri H."/>
            <person name="Zhang C."/>
            <person name="Niu H."/>
            <person name="Lin Q."/>
            <person name="Ohashi N."/>
            <person name="Zhi N."/>
            <person name="Nelson W.C."/>
            <person name="Brinkac L.M."/>
            <person name="Dodson R.J."/>
            <person name="Rosovitz M.J."/>
            <person name="Sundaram J.P."/>
            <person name="Daugherty S.C."/>
            <person name="Davidsen T."/>
            <person name="Durkin A.S."/>
            <person name="Gwinn M.L."/>
            <person name="Haft D.H."/>
            <person name="Selengut J.D."/>
            <person name="Sullivan S.A."/>
            <person name="Zafar N."/>
            <person name="Zhou L."/>
            <person name="Benahmed F."/>
            <person name="Forberger H."/>
            <person name="Halpin R."/>
            <person name="Mulligan S."/>
            <person name="Robinson J."/>
            <person name="White O."/>
            <person name="Rikihisa Y."/>
            <person name="Tettelin H."/>
        </authorList>
    </citation>
    <scope>NUCLEOTIDE SEQUENCE [LARGE SCALE GENOMIC DNA]</scope>
    <source>
        <strain>ATCC CRL-10679 / Arkansas</strain>
    </source>
</reference>
<sequence>MKIDFNTLFPSSTKEYISGTIYNNIKVGMRRIHINDNSESILTYDTGGPHTDQKIKIDINQGIEKIRLNWIVDRQDVEYHKRQEVNTNSEYAFPLQSNNILKANSNKPITQMYYARNNIITPEMEYVAIRENALRQKILSYKPTVMAPEITPEFVRQEIASGRAIIPANVNHPESEPMIIGKNFLVKINANIGNSVVSSSIEDELQKMIYAIIYGADTVMDLSTGNNIHNIREWIIRNSPVPIGTVPIYQALNKVNGVVGDLDFNIFKKTLIEQAEQGVDYFTIHAGVLKNYIDYTDNRLTGIVSRGGAIMAHWCTIHNKENFLYTNFEEICDIMKHYDITFSLGDGLRPGSIADANDTAQFLELKTLGELTDIAWKHDCQVMIEGPGHVPMHLIKENVEKQVHFCKEAPFYTLGPLTTDIAPGYDHITSAIGAAIIGWYGTSMLCYVTPKEHLGLPNIQDVKDGVIAYKIAAHAADLAKGNPSAYIRDYALSYARFNFKWYDQFNLSLDPETAKSLHDESLPSENAKSAHFCSMCGPKFCSMKLTHQIKSIEE</sequence>
<comment type="function">
    <text evidence="1">Catalyzes the synthesis of the hydroxymethylpyrimidine phosphate (HMP-P) moiety of thiamine from aminoimidazole ribotide (AIR) in a radical S-adenosyl-L-methionine (SAM)-dependent reaction.</text>
</comment>
<comment type="catalytic activity">
    <reaction evidence="1">
        <text>5-amino-1-(5-phospho-beta-D-ribosyl)imidazole + S-adenosyl-L-methionine = 4-amino-2-methyl-5-(phosphooxymethyl)pyrimidine + CO + 5'-deoxyadenosine + formate + L-methionine + 3 H(+)</text>
        <dbReference type="Rhea" id="RHEA:24840"/>
        <dbReference type="ChEBI" id="CHEBI:15378"/>
        <dbReference type="ChEBI" id="CHEBI:15740"/>
        <dbReference type="ChEBI" id="CHEBI:17245"/>
        <dbReference type="ChEBI" id="CHEBI:17319"/>
        <dbReference type="ChEBI" id="CHEBI:57844"/>
        <dbReference type="ChEBI" id="CHEBI:58354"/>
        <dbReference type="ChEBI" id="CHEBI:59789"/>
        <dbReference type="ChEBI" id="CHEBI:137981"/>
        <dbReference type="EC" id="4.1.99.17"/>
    </reaction>
</comment>
<comment type="cofactor">
    <cofactor evidence="1">
        <name>[4Fe-4S] cluster</name>
        <dbReference type="ChEBI" id="CHEBI:49883"/>
    </cofactor>
    <text evidence="1">Binds 1 [4Fe-4S] cluster per subunit. The cluster is coordinated with 3 cysteines and an exchangeable S-adenosyl-L-methionine.</text>
</comment>
<comment type="pathway">
    <text evidence="1">Cofactor biosynthesis; thiamine diphosphate biosynthesis.</text>
</comment>
<comment type="subunit">
    <text evidence="1">Homodimer.</text>
</comment>
<comment type="similarity">
    <text evidence="1">Belongs to the ThiC family.</text>
</comment>
<feature type="chain" id="PRO_0000242259" description="Phosphomethylpyrimidine synthase">
    <location>
        <begin position="1"/>
        <end position="554"/>
    </location>
</feature>
<feature type="binding site" evidence="1">
    <location>
        <position position="191"/>
    </location>
    <ligand>
        <name>substrate</name>
    </ligand>
</feature>
<feature type="binding site" evidence="1">
    <location>
        <position position="220"/>
    </location>
    <ligand>
        <name>substrate</name>
    </ligand>
</feature>
<feature type="binding site" evidence="1">
    <location>
        <position position="249"/>
    </location>
    <ligand>
        <name>substrate</name>
    </ligand>
</feature>
<feature type="binding site" evidence="1">
    <location>
        <position position="285"/>
    </location>
    <ligand>
        <name>substrate</name>
    </ligand>
</feature>
<feature type="binding site" evidence="1">
    <location>
        <begin position="305"/>
        <end position="307"/>
    </location>
    <ligand>
        <name>substrate</name>
    </ligand>
</feature>
<feature type="binding site" evidence="1">
    <location>
        <begin position="346"/>
        <end position="349"/>
    </location>
    <ligand>
        <name>substrate</name>
    </ligand>
</feature>
<feature type="binding site" evidence="1">
    <location>
        <position position="385"/>
    </location>
    <ligand>
        <name>substrate</name>
    </ligand>
</feature>
<feature type="binding site" evidence="1">
    <location>
        <position position="389"/>
    </location>
    <ligand>
        <name>Zn(2+)</name>
        <dbReference type="ChEBI" id="CHEBI:29105"/>
    </ligand>
</feature>
<feature type="binding site" evidence="1">
    <location>
        <position position="412"/>
    </location>
    <ligand>
        <name>substrate</name>
    </ligand>
</feature>
<feature type="binding site" evidence="1">
    <location>
        <position position="453"/>
    </location>
    <ligand>
        <name>Zn(2+)</name>
        <dbReference type="ChEBI" id="CHEBI:29105"/>
    </ligand>
</feature>
<feature type="binding site" evidence="1">
    <location>
        <position position="533"/>
    </location>
    <ligand>
        <name>[4Fe-4S] cluster</name>
        <dbReference type="ChEBI" id="CHEBI:49883"/>
        <note>4Fe-4S-S-AdoMet</note>
    </ligand>
</feature>
<feature type="binding site" evidence="1">
    <location>
        <position position="536"/>
    </location>
    <ligand>
        <name>[4Fe-4S] cluster</name>
        <dbReference type="ChEBI" id="CHEBI:49883"/>
        <note>4Fe-4S-S-AdoMet</note>
    </ligand>
</feature>
<feature type="binding site" evidence="1">
    <location>
        <position position="541"/>
    </location>
    <ligand>
        <name>[4Fe-4S] cluster</name>
        <dbReference type="ChEBI" id="CHEBI:49883"/>
        <note>4Fe-4S-S-AdoMet</note>
    </ligand>
</feature>
<protein>
    <recommendedName>
        <fullName evidence="1">Phosphomethylpyrimidine synthase</fullName>
        <ecNumber evidence="1">4.1.99.17</ecNumber>
    </recommendedName>
    <alternativeName>
        <fullName evidence="1">Hydroxymethylpyrimidine phosphate synthase</fullName>
        <shortName evidence="1">HMP-P synthase</shortName>
        <shortName evidence="1">HMP-phosphate synthase</shortName>
        <shortName evidence="1">HMPP synthase</shortName>
    </alternativeName>
    <alternativeName>
        <fullName evidence="1">Thiamine biosynthesis protein ThiC</fullName>
    </alternativeName>
</protein>
<evidence type="ECO:0000255" key="1">
    <source>
        <dbReference type="HAMAP-Rule" id="MF_00089"/>
    </source>
</evidence>